<proteinExistence type="inferred from homology"/>
<dbReference type="EC" id="2.7.7.4" evidence="1"/>
<dbReference type="EMBL" id="CP000462">
    <property type="protein sequence ID" value="ABK38235.1"/>
    <property type="molecule type" value="Genomic_DNA"/>
</dbReference>
<dbReference type="RefSeq" id="WP_011707309.1">
    <property type="nucleotide sequence ID" value="NC_008570.1"/>
</dbReference>
<dbReference type="RefSeq" id="YP_858037.1">
    <property type="nucleotide sequence ID" value="NC_008570.1"/>
</dbReference>
<dbReference type="SMR" id="A0KP36"/>
<dbReference type="STRING" id="380703.AHA_3567"/>
<dbReference type="EnsemblBacteria" id="ABK38235">
    <property type="protein sequence ID" value="ABK38235"/>
    <property type="gene ID" value="AHA_3567"/>
</dbReference>
<dbReference type="GeneID" id="4488262"/>
<dbReference type="KEGG" id="aha:AHA_3567"/>
<dbReference type="PATRIC" id="fig|380703.7.peg.3554"/>
<dbReference type="eggNOG" id="COG0175">
    <property type="taxonomic scope" value="Bacteria"/>
</dbReference>
<dbReference type="HOGENOM" id="CLU_043026_0_0_6"/>
<dbReference type="OrthoDB" id="9772604at2"/>
<dbReference type="UniPathway" id="UPA00140">
    <property type="reaction ID" value="UER00204"/>
</dbReference>
<dbReference type="Proteomes" id="UP000000756">
    <property type="component" value="Chromosome"/>
</dbReference>
<dbReference type="GO" id="GO:0005524">
    <property type="term" value="F:ATP binding"/>
    <property type="evidence" value="ECO:0007669"/>
    <property type="project" value="UniProtKB-KW"/>
</dbReference>
<dbReference type="GO" id="GO:0004781">
    <property type="term" value="F:sulfate adenylyltransferase (ATP) activity"/>
    <property type="evidence" value="ECO:0007669"/>
    <property type="project" value="UniProtKB-UniRule"/>
</dbReference>
<dbReference type="GO" id="GO:0070814">
    <property type="term" value="P:hydrogen sulfide biosynthetic process"/>
    <property type="evidence" value="ECO:0007669"/>
    <property type="project" value="UniProtKB-UniRule"/>
</dbReference>
<dbReference type="GO" id="GO:0000103">
    <property type="term" value="P:sulfate assimilation"/>
    <property type="evidence" value="ECO:0007669"/>
    <property type="project" value="UniProtKB-UniRule"/>
</dbReference>
<dbReference type="CDD" id="cd23946">
    <property type="entry name" value="Sulfate_adenylyltransferase_2"/>
    <property type="match status" value="1"/>
</dbReference>
<dbReference type="FunFam" id="3.40.50.620:FF:000002">
    <property type="entry name" value="Sulfate adenylyltransferase subunit 2"/>
    <property type="match status" value="1"/>
</dbReference>
<dbReference type="Gene3D" id="3.40.50.620">
    <property type="entry name" value="HUPs"/>
    <property type="match status" value="1"/>
</dbReference>
<dbReference type="HAMAP" id="MF_00064">
    <property type="entry name" value="Sulf_adenylyltr_sub2"/>
    <property type="match status" value="1"/>
</dbReference>
<dbReference type="InterPro" id="IPR002500">
    <property type="entry name" value="PAPS_reduct_dom"/>
</dbReference>
<dbReference type="InterPro" id="IPR014729">
    <property type="entry name" value="Rossmann-like_a/b/a_fold"/>
</dbReference>
<dbReference type="InterPro" id="IPR011784">
    <property type="entry name" value="SO4_adenylTrfase_ssu"/>
</dbReference>
<dbReference type="InterPro" id="IPR050128">
    <property type="entry name" value="Sulfate_adenylyltrnsfr_sub2"/>
</dbReference>
<dbReference type="NCBIfam" id="TIGR02039">
    <property type="entry name" value="CysD"/>
    <property type="match status" value="1"/>
</dbReference>
<dbReference type="NCBIfam" id="NF003587">
    <property type="entry name" value="PRK05253.1"/>
    <property type="match status" value="1"/>
</dbReference>
<dbReference type="NCBIfam" id="NF009214">
    <property type="entry name" value="PRK12563.1"/>
    <property type="match status" value="1"/>
</dbReference>
<dbReference type="PANTHER" id="PTHR43196">
    <property type="entry name" value="SULFATE ADENYLYLTRANSFERASE SUBUNIT 2"/>
    <property type="match status" value="1"/>
</dbReference>
<dbReference type="PANTHER" id="PTHR43196:SF1">
    <property type="entry name" value="SULFATE ADENYLYLTRANSFERASE SUBUNIT 2"/>
    <property type="match status" value="1"/>
</dbReference>
<dbReference type="Pfam" id="PF01507">
    <property type="entry name" value="PAPS_reduct"/>
    <property type="match status" value="1"/>
</dbReference>
<dbReference type="PIRSF" id="PIRSF002936">
    <property type="entry name" value="CysDAde_trans"/>
    <property type="match status" value="1"/>
</dbReference>
<dbReference type="SUPFAM" id="SSF52402">
    <property type="entry name" value="Adenine nucleotide alpha hydrolases-like"/>
    <property type="match status" value="1"/>
</dbReference>
<protein>
    <recommendedName>
        <fullName evidence="1">Sulfate adenylyltransferase subunit 2</fullName>
        <ecNumber evidence="1">2.7.7.4</ecNumber>
    </recommendedName>
    <alternativeName>
        <fullName evidence="1">ATP-sulfurylase small subunit</fullName>
    </alternativeName>
    <alternativeName>
        <fullName evidence="1">Sulfate adenylate transferase</fullName>
        <shortName evidence="1">SAT</shortName>
    </alternativeName>
</protein>
<comment type="function">
    <text evidence="1">With CysN forms the ATP sulfurylase (ATPS) that catalyzes the adenylation of sulfate producing adenosine 5'-phosphosulfate (APS) and diphosphate, the first enzymatic step in sulfur assimilation pathway. APS synthesis involves the formation of a high-energy phosphoric-sulfuric acid anhydride bond driven by GTP hydrolysis by CysN coupled to ATP hydrolysis by CysD.</text>
</comment>
<comment type="catalytic activity">
    <reaction evidence="1">
        <text>sulfate + ATP + H(+) = adenosine 5'-phosphosulfate + diphosphate</text>
        <dbReference type="Rhea" id="RHEA:18133"/>
        <dbReference type="ChEBI" id="CHEBI:15378"/>
        <dbReference type="ChEBI" id="CHEBI:16189"/>
        <dbReference type="ChEBI" id="CHEBI:30616"/>
        <dbReference type="ChEBI" id="CHEBI:33019"/>
        <dbReference type="ChEBI" id="CHEBI:58243"/>
        <dbReference type="EC" id="2.7.7.4"/>
    </reaction>
</comment>
<comment type="pathway">
    <text evidence="1">Sulfur metabolism; hydrogen sulfide biosynthesis; sulfite from sulfate: step 1/3.</text>
</comment>
<comment type="subunit">
    <text evidence="1">Heterodimer composed of CysD, the smaller subunit, and CysN.</text>
</comment>
<comment type="similarity">
    <text evidence="1">Belongs to the PAPS reductase family. CysD subfamily.</text>
</comment>
<gene>
    <name evidence="1" type="primary">cysD</name>
    <name type="ordered locus">AHA_3567</name>
</gene>
<reference key="1">
    <citation type="journal article" date="2006" name="J. Bacteriol.">
        <title>Genome sequence of Aeromonas hydrophila ATCC 7966T: jack of all trades.</title>
        <authorList>
            <person name="Seshadri R."/>
            <person name="Joseph S.W."/>
            <person name="Chopra A.K."/>
            <person name="Sha J."/>
            <person name="Shaw J."/>
            <person name="Graf J."/>
            <person name="Haft D.H."/>
            <person name="Wu M."/>
            <person name="Ren Q."/>
            <person name="Rosovitz M.J."/>
            <person name="Madupu R."/>
            <person name="Tallon L."/>
            <person name="Kim M."/>
            <person name="Jin S."/>
            <person name="Vuong H."/>
            <person name="Stine O.C."/>
            <person name="Ali A."/>
            <person name="Horneman A.J."/>
            <person name="Heidelberg J.F."/>
        </authorList>
    </citation>
    <scope>NUCLEOTIDE SEQUENCE [LARGE SCALE GENOMIC DNA]</scope>
    <source>
        <strain>ATCC 7966 / DSM 30187 / BCRC 13018 / CCUG 14551 / JCM 1027 / KCTC 2358 / NCIMB 9240 / NCTC 8049</strain>
    </source>
</reference>
<feature type="chain" id="PRO_1000008951" description="Sulfate adenylyltransferase subunit 2">
    <location>
        <begin position="1"/>
        <end position="302"/>
    </location>
</feature>
<organism>
    <name type="scientific">Aeromonas hydrophila subsp. hydrophila (strain ATCC 7966 / DSM 30187 / BCRC 13018 / CCUG 14551 / JCM 1027 / KCTC 2358 / NCIMB 9240 / NCTC 8049)</name>
    <dbReference type="NCBI Taxonomy" id="380703"/>
    <lineage>
        <taxon>Bacteria</taxon>
        <taxon>Pseudomonadati</taxon>
        <taxon>Pseudomonadota</taxon>
        <taxon>Gammaproteobacteria</taxon>
        <taxon>Aeromonadales</taxon>
        <taxon>Aeromonadaceae</taxon>
        <taxon>Aeromonas</taxon>
    </lineage>
</organism>
<sequence>MDRERLTHLQQLEAESIHIIREVAAEFENPVMMYSIGKDSSVMLHLARKAFYPGKIPFPLLHVDTDWKFKEMIKFRDETARKYGLDLIVHKNPDGLAMGINPFVHGSGKHTDIMKTEGLKQALNKYGFDAAFGGARRDEEKSRAKERVYSFRDKSHRWDPKNQRPELWRVYNSQVNKGESIRVFPLSNWTELDIWQYIYLENIDIVPLYFAAMRPVVERNGIKIMVDDERMPIGPEDEVKQELVRFRTLGCYPLTGAIESAATTLPEIIEEMLLTTSSERQGRLIDHDQAGSMEQKKRQGYF</sequence>
<name>CYSD_AERHH</name>
<accession>A0KP36</accession>
<evidence type="ECO:0000255" key="1">
    <source>
        <dbReference type="HAMAP-Rule" id="MF_00064"/>
    </source>
</evidence>
<keyword id="KW-0067">ATP-binding</keyword>
<keyword id="KW-0547">Nucleotide-binding</keyword>
<keyword id="KW-0548">Nucleotidyltransferase</keyword>
<keyword id="KW-1185">Reference proteome</keyword>
<keyword id="KW-0808">Transferase</keyword>